<reference key="1">
    <citation type="journal article" date="2003" name="Nat. Genet.">
        <title>Comparative analysis of the genome sequences of Bordetella pertussis, Bordetella parapertussis and Bordetella bronchiseptica.</title>
        <authorList>
            <person name="Parkhill J."/>
            <person name="Sebaihia M."/>
            <person name="Preston A."/>
            <person name="Murphy L.D."/>
            <person name="Thomson N.R."/>
            <person name="Harris D.E."/>
            <person name="Holden M.T.G."/>
            <person name="Churcher C.M."/>
            <person name="Bentley S.D."/>
            <person name="Mungall K.L."/>
            <person name="Cerdeno-Tarraga A.-M."/>
            <person name="Temple L."/>
            <person name="James K.D."/>
            <person name="Harris B."/>
            <person name="Quail M.A."/>
            <person name="Achtman M."/>
            <person name="Atkin R."/>
            <person name="Baker S."/>
            <person name="Basham D."/>
            <person name="Bason N."/>
            <person name="Cherevach I."/>
            <person name="Chillingworth T."/>
            <person name="Collins M."/>
            <person name="Cronin A."/>
            <person name="Davis P."/>
            <person name="Doggett J."/>
            <person name="Feltwell T."/>
            <person name="Goble A."/>
            <person name="Hamlin N."/>
            <person name="Hauser H."/>
            <person name="Holroyd S."/>
            <person name="Jagels K."/>
            <person name="Leather S."/>
            <person name="Moule S."/>
            <person name="Norberczak H."/>
            <person name="O'Neil S."/>
            <person name="Ormond D."/>
            <person name="Price C."/>
            <person name="Rabbinowitsch E."/>
            <person name="Rutter S."/>
            <person name="Sanders M."/>
            <person name="Saunders D."/>
            <person name="Seeger K."/>
            <person name="Sharp S."/>
            <person name="Simmonds M."/>
            <person name="Skelton J."/>
            <person name="Squares R."/>
            <person name="Squares S."/>
            <person name="Stevens K."/>
            <person name="Unwin L."/>
            <person name="Whitehead S."/>
            <person name="Barrell B.G."/>
            <person name="Maskell D.J."/>
        </authorList>
    </citation>
    <scope>NUCLEOTIDE SEQUENCE [LARGE SCALE GENOMIC DNA]</scope>
    <source>
        <strain>12822 / ATCC BAA-587 / NCTC 13253</strain>
    </source>
</reference>
<proteinExistence type="inferred from homology"/>
<keyword id="KW-0963">Cytoplasm</keyword>
<keyword id="KW-0570">Pentose shunt</keyword>
<keyword id="KW-0704">Schiff base</keyword>
<keyword id="KW-0808">Transferase</keyword>
<protein>
    <recommendedName>
        <fullName evidence="2">Transaldolase</fullName>
        <ecNumber evidence="2">2.2.1.2</ecNumber>
    </recommendedName>
</protein>
<organism>
    <name type="scientific">Bordetella parapertussis (strain 12822 / ATCC BAA-587 / NCTC 13253)</name>
    <dbReference type="NCBI Taxonomy" id="257311"/>
    <lineage>
        <taxon>Bacteria</taxon>
        <taxon>Pseudomonadati</taxon>
        <taxon>Pseudomonadota</taxon>
        <taxon>Betaproteobacteria</taxon>
        <taxon>Burkholderiales</taxon>
        <taxon>Alcaligenaceae</taxon>
        <taxon>Bordetella</taxon>
    </lineage>
</organism>
<gene>
    <name evidence="2" type="primary">tal</name>
    <name type="ordered locus">BPP1228</name>
</gene>
<accession>Q7WAY2</accession>
<feature type="chain" id="PRO_0000173580" description="Transaldolase">
    <location>
        <begin position="1"/>
        <end position="320"/>
    </location>
</feature>
<feature type="active site" description="Schiff-base intermediate with substrate" evidence="2">
    <location>
        <position position="126"/>
    </location>
</feature>
<dbReference type="EC" id="2.2.1.2" evidence="2"/>
<dbReference type="EMBL" id="BX640426">
    <property type="protein sequence ID" value="CAE36530.1"/>
    <property type="molecule type" value="Genomic_DNA"/>
</dbReference>
<dbReference type="RefSeq" id="WP_010926156.1">
    <property type="nucleotide sequence ID" value="NC_002928.3"/>
</dbReference>
<dbReference type="SMR" id="Q7WAY2"/>
<dbReference type="GeneID" id="93202985"/>
<dbReference type="KEGG" id="bpa:BPP1228"/>
<dbReference type="HOGENOM" id="CLU_047470_0_1_4"/>
<dbReference type="UniPathway" id="UPA00115">
    <property type="reaction ID" value="UER00414"/>
</dbReference>
<dbReference type="Proteomes" id="UP000001421">
    <property type="component" value="Chromosome"/>
</dbReference>
<dbReference type="GO" id="GO:0005737">
    <property type="term" value="C:cytoplasm"/>
    <property type="evidence" value="ECO:0007669"/>
    <property type="project" value="UniProtKB-SubCell"/>
</dbReference>
<dbReference type="GO" id="GO:0004801">
    <property type="term" value="F:transaldolase activity"/>
    <property type="evidence" value="ECO:0000250"/>
    <property type="project" value="UniProtKB"/>
</dbReference>
<dbReference type="GO" id="GO:0005975">
    <property type="term" value="P:carbohydrate metabolic process"/>
    <property type="evidence" value="ECO:0007669"/>
    <property type="project" value="InterPro"/>
</dbReference>
<dbReference type="GO" id="GO:0006098">
    <property type="term" value="P:pentose-phosphate shunt"/>
    <property type="evidence" value="ECO:0007669"/>
    <property type="project" value="UniProtKB-UniRule"/>
</dbReference>
<dbReference type="CDD" id="cd00957">
    <property type="entry name" value="Transaldolase_TalAB"/>
    <property type="match status" value="1"/>
</dbReference>
<dbReference type="FunFam" id="3.20.20.70:FF:000131">
    <property type="entry name" value="Transaldolase"/>
    <property type="match status" value="1"/>
</dbReference>
<dbReference type="Gene3D" id="3.20.20.70">
    <property type="entry name" value="Aldolase class I"/>
    <property type="match status" value="1"/>
</dbReference>
<dbReference type="HAMAP" id="MF_00492">
    <property type="entry name" value="Transaldolase_1"/>
    <property type="match status" value="1"/>
</dbReference>
<dbReference type="InterPro" id="IPR013785">
    <property type="entry name" value="Aldolase_TIM"/>
</dbReference>
<dbReference type="InterPro" id="IPR001585">
    <property type="entry name" value="TAL/FSA"/>
</dbReference>
<dbReference type="InterPro" id="IPR004730">
    <property type="entry name" value="Transaldolase_1"/>
</dbReference>
<dbReference type="InterPro" id="IPR018225">
    <property type="entry name" value="Transaldolase_AS"/>
</dbReference>
<dbReference type="NCBIfam" id="TIGR00874">
    <property type="entry name" value="talAB"/>
    <property type="match status" value="1"/>
</dbReference>
<dbReference type="PANTHER" id="PTHR10683">
    <property type="entry name" value="TRANSALDOLASE"/>
    <property type="match status" value="1"/>
</dbReference>
<dbReference type="PANTHER" id="PTHR10683:SF18">
    <property type="entry name" value="TRANSALDOLASE"/>
    <property type="match status" value="1"/>
</dbReference>
<dbReference type="Pfam" id="PF00923">
    <property type="entry name" value="TAL_FSA"/>
    <property type="match status" value="1"/>
</dbReference>
<dbReference type="SUPFAM" id="SSF51569">
    <property type="entry name" value="Aldolase"/>
    <property type="match status" value="1"/>
</dbReference>
<dbReference type="PROSITE" id="PS01054">
    <property type="entry name" value="TRANSALDOLASE_1"/>
    <property type="match status" value="1"/>
</dbReference>
<dbReference type="PROSITE" id="PS00958">
    <property type="entry name" value="TRANSALDOLASE_2"/>
    <property type="match status" value="1"/>
</dbReference>
<name>TAL_BORPA</name>
<sequence length="320" mass="34813">MPSQLEALRRHTVVVADTGDFEAMRALRPTDATTNPSLILKAVQQEAYRPLLVQTARAHQGASPAEITDRLLVAFGRQILDIVPGRVSTEVDARLSFDTRATVERARGLIALYQAAGVPRERVLIKIASTWEGIQAARVLQAEGIRCNLTLLFCLPQAAACADAGVQLISPFVGRIYDWHKKNAGAEWVEDARRGANDPGVQSVSRIYRYYKRFGIETEIMGASFRNVDQILALAGCDLLTISPELLTRLSQTEGEVPAALSPQAGHDDADAVRLDGGEVAFRTQLNEDAMASEKLSEGIRLFVADARKLDALIESHGAA</sequence>
<evidence type="ECO:0000250" key="1"/>
<evidence type="ECO:0000255" key="2">
    <source>
        <dbReference type="HAMAP-Rule" id="MF_00492"/>
    </source>
</evidence>
<comment type="function">
    <text evidence="2">Transaldolase is important for the balance of metabolites in the pentose-phosphate pathway.</text>
</comment>
<comment type="catalytic activity">
    <reaction evidence="2">
        <text>D-sedoheptulose 7-phosphate + D-glyceraldehyde 3-phosphate = D-erythrose 4-phosphate + beta-D-fructose 6-phosphate</text>
        <dbReference type="Rhea" id="RHEA:17053"/>
        <dbReference type="ChEBI" id="CHEBI:16897"/>
        <dbReference type="ChEBI" id="CHEBI:57483"/>
        <dbReference type="ChEBI" id="CHEBI:57634"/>
        <dbReference type="ChEBI" id="CHEBI:59776"/>
        <dbReference type="EC" id="2.2.1.2"/>
    </reaction>
</comment>
<comment type="pathway">
    <text evidence="2">Carbohydrate degradation; pentose phosphate pathway; D-glyceraldehyde 3-phosphate and beta-D-fructose 6-phosphate from D-ribose 5-phosphate and D-xylulose 5-phosphate (non-oxidative stage): step 2/3.</text>
</comment>
<comment type="subunit">
    <text evidence="1">Homodimer.</text>
</comment>
<comment type="subcellular location">
    <subcellularLocation>
        <location evidence="2">Cytoplasm</location>
    </subcellularLocation>
</comment>
<comment type="similarity">
    <text evidence="2">Belongs to the transaldolase family. Type 1 subfamily.</text>
</comment>